<gene>
    <name type="primary">OR4K13</name>
</gene>
<dbReference type="EMBL" id="AB065559">
    <property type="protein sequence ID" value="BAC05797.1"/>
    <property type="molecule type" value="Genomic_DNA"/>
</dbReference>
<dbReference type="EMBL" id="BK004449">
    <property type="protein sequence ID" value="DAA04847.1"/>
    <property type="molecule type" value="Genomic_DNA"/>
</dbReference>
<dbReference type="CCDS" id="CCDS32028.1"/>
<dbReference type="RefSeq" id="NP_001004714.1">
    <property type="nucleotide sequence ID" value="NM_001004714.2"/>
</dbReference>
<dbReference type="RefSeq" id="NP_001372958.1">
    <property type="nucleotide sequence ID" value="NM_001386029.1"/>
</dbReference>
<dbReference type="SMR" id="Q8NH42"/>
<dbReference type="FunCoup" id="Q8NH42">
    <property type="interactions" value="416"/>
</dbReference>
<dbReference type="STRING" id="9606.ENSP00000493405"/>
<dbReference type="GlyCosmos" id="Q8NH42">
    <property type="glycosylation" value="1 site, No reported glycans"/>
</dbReference>
<dbReference type="GlyGen" id="Q8NH42">
    <property type="glycosylation" value="1 site"/>
</dbReference>
<dbReference type="iPTMnet" id="Q8NH42"/>
<dbReference type="PhosphoSitePlus" id="Q8NH42"/>
<dbReference type="BioMuta" id="OR4K13"/>
<dbReference type="DMDM" id="38372805"/>
<dbReference type="MassIVE" id="Q8NH42"/>
<dbReference type="PaxDb" id="9606-ENSP00000319322"/>
<dbReference type="PeptideAtlas" id="Q8NH42"/>
<dbReference type="Antibodypedia" id="66262">
    <property type="antibodies" value="63 antibodies from 18 providers"/>
</dbReference>
<dbReference type="DNASU" id="390433"/>
<dbReference type="Ensembl" id="ENST00000641664.1">
    <property type="protein sequence ID" value="ENSP00000493405.1"/>
    <property type="gene ID" value="ENSG00000176253.4"/>
</dbReference>
<dbReference type="Ensembl" id="ENST00000641904.1">
    <property type="protein sequence ID" value="ENSP00000492930.1"/>
    <property type="gene ID" value="ENSG00000176253.4"/>
</dbReference>
<dbReference type="Ensembl" id="ENST00000708838.1">
    <property type="protein sequence ID" value="ENSP00000517369.1"/>
    <property type="gene ID" value="ENSG00000291806.1"/>
</dbReference>
<dbReference type="Ensembl" id="ENST00000708839.1">
    <property type="protein sequence ID" value="ENSP00000517370.1"/>
    <property type="gene ID" value="ENSG00000291806.1"/>
</dbReference>
<dbReference type="GeneID" id="390433"/>
<dbReference type="KEGG" id="hsa:390433"/>
<dbReference type="MANE-Select" id="ENST00000641904.1">
    <property type="protein sequence ID" value="ENSP00000492930.1"/>
    <property type="RefSeq nucleotide sequence ID" value="NM_001004714.2"/>
    <property type="RefSeq protein sequence ID" value="NP_001004714.1"/>
</dbReference>
<dbReference type="UCSC" id="uc010tkz.3">
    <property type="organism name" value="human"/>
</dbReference>
<dbReference type="AGR" id="HGNC:15351"/>
<dbReference type="CTD" id="390433"/>
<dbReference type="GeneCards" id="OR4K13"/>
<dbReference type="HGNC" id="HGNC:15351">
    <property type="gene designation" value="OR4K13"/>
</dbReference>
<dbReference type="HPA" id="ENSG00000176253">
    <property type="expression patterns" value="Not detected"/>
</dbReference>
<dbReference type="neXtProt" id="NX_Q8NH42"/>
<dbReference type="PharmGKB" id="PA32312"/>
<dbReference type="VEuPathDB" id="HostDB:ENSG00000176253"/>
<dbReference type="eggNOG" id="ENOG502TF8Y">
    <property type="taxonomic scope" value="Eukaryota"/>
</dbReference>
<dbReference type="GeneTree" id="ENSGT00940000163860"/>
<dbReference type="HOGENOM" id="CLU_012526_8_2_1"/>
<dbReference type="InParanoid" id="Q8NH42"/>
<dbReference type="OMA" id="TIIIYSV"/>
<dbReference type="OrthoDB" id="9615015at2759"/>
<dbReference type="PAN-GO" id="Q8NH42">
    <property type="GO annotations" value="2 GO annotations based on evolutionary models"/>
</dbReference>
<dbReference type="PhylomeDB" id="Q8NH42"/>
<dbReference type="TreeFam" id="TF337251"/>
<dbReference type="PathwayCommons" id="Q8NH42"/>
<dbReference type="Reactome" id="R-HSA-9752946">
    <property type="pathway name" value="Expression and translocation of olfactory receptors"/>
</dbReference>
<dbReference type="BioGRID-ORCS" id="390433">
    <property type="hits" value="18 hits in 747 CRISPR screens"/>
</dbReference>
<dbReference type="GeneWiki" id="OR4K13"/>
<dbReference type="GenomeRNAi" id="390433"/>
<dbReference type="Pharos" id="Q8NH42">
    <property type="development level" value="Tdark"/>
</dbReference>
<dbReference type="PRO" id="PR:Q8NH42"/>
<dbReference type="Proteomes" id="UP000005640">
    <property type="component" value="Chromosome 14"/>
</dbReference>
<dbReference type="RNAct" id="Q8NH42">
    <property type="molecule type" value="protein"/>
</dbReference>
<dbReference type="ExpressionAtlas" id="Q8NH42">
    <property type="expression patterns" value="differential"/>
</dbReference>
<dbReference type="GO" id="GO:0005886">
    <property type="term" value="C:plasma membrane"/>
    <property type="evidence" value="ECO:0007669"/>
    <property type="project" value="UniProtKB-SubCell"/>
</dbReference>
<dbReference type="GO" id="GO:0004930">
    <property type="term" value="F:G protein-coupled receptor activity"/>
    <property type="evidence" value="ECO:0007669"/>
    <property type="project" value="UniProtKB-KW"/>
</dbReference>
<dbReference type="GO" id="GO:0004984">
    <property type="term" value="F:olfactory receptor activity"/>
    <property type="evidence" value="ECO:0000318"/>
    <property type="project" value="GO_Central"/>
</dbReference>
<dbReference type="CDD" id="cd15226">
    <property type="entry name" value="7tmA_OR4-like"/>
    <property type="match status" value="1"/>
</dbReference>
<dbReference type="FunFam" id="1.10.1220.70:FF:000001">
    <property type="entry name" value="Olfactory receptor"/>
    <property type="match status" value="1"/>
</dbReference>
<dbReference type="FunFam" id="1.20.1070.10:FF:000012">
    <property type="entry name" value="Olfactory receptor"/>
    <property type="match status" value="1"/>
</dbReference>
<dbReference type="Gene3D" id="1.20.1070.10">
    <property type="entry name" value="Rhodopsin 7-helix transmembrane proteins"/>
    <property type="match status" value="1"/>
</dbReference>
<dbReference type="InterPro" id="IPR000276">
    <property type="entry name" value="GPCR_Rhodpsn"/>
</dbReference>
<dbReference type="InterPro" id="IPR017452">
    <property type="entry name" value="GPCR_Rhodpsn_7TM"/>
</dbReference>
<dbReference type="InterPro" id="IPR000725">
    <property type="entry name" value="Olfact_rcpt"/>
</dbReference>
<dbReference type="InterPro" id="IPR050427">
    <property type="entry name" value="Olfactory_Receptors"/>
</dbReference>
<dbReference type="PANTHER" id="PTHR48002">
    <property type="entry name" value="OLFACTORY RECEPTOR"/>
    <property type="match status" value="1"/>
</dbReference>
<dbReference type="Pfam" id="PF13853">
    <property type="entry name" value="7tm_4"/>
    <property type="match status" value="1"/>
</dbReference>
<dbReference type="PRINTS" id="PR00237">
    <property type="entry name" value="GPCRRHODOPSN"/>
</dbReference>
<dbReference type="PRINTS" id="PR00245">
    <property type="entry name" value="OLFACTORYR"/>
</dbReference>
<dbReference type="SUPFAM" id="SSF81321">
    <property type="entry name" value="Family A G protein-coupled receptor-like"/>
    <property type="match status" value="1"/>
</dbReference>
<dbReference type="PROSITE" id="PS00237">
    <property type="entry name" value="G_PROTEIN_RECEP_F1_1"/>
    <property type="match status" value="1"/>
</dbReference>
<dbReference type="PROSITE" id="PS50262">
    <property type="entry name" value="G_PROTEIN_RECEP_F1_2"/>
    <property type="match status" value="1"/>
</dbReference>
<reference key="1">
    <citation type="submission" date="2001-07" db="EMBL/GenBank/DDBJ databases">
        <title>Genome-wide discovery and analysis of human seven transmembrane helix receptor genes.</title>
        <authorList>
            <person name="Suwa M."/>
            <person name="Sato T."/>
            <person name="Okouchi I."/>
            <person name="Arita M."/>
            <person name="Futami K."/>
            <person name="Matsumoto S."/>
            <person name="Tsutsumi S."/>
            <person name="Aburatani H."/>
            <person name="Asai K."/>
            <person name="Akiyama Y."/>
        </authorList>
    </citation>
    <scope>NUCLEOTIDE SEQUENCE [GENOMIC DNA]</scope>
</reference>
<reference key="2">
    <citation type="journal article" date="2004" name="Proc. Natl. Acad. Sci. U.S.A.">
        <title>The human olfactory receptor gene family.</title>
        <authorList>
            <person name="Malnic B."/>
            <person name="Godfrey P.A."/>
            <person name="Buck L.B."/>
        </authorList>
    </citation>
    <scope>IDENTIFICATION</scope>
</reference>
<reference key="3">
    <citation type="journal article" date="2004" name="Proc. Natl. Acad. Sci. U.S.A.">
        <authorList>
            <person name="Malnic B."/>
            <person name="Godfrey P.A."/>
            <person name="Buck L.B."/>
        </authorList>
    </citation>
    <scope>ERRATUM OF PUBMED:14983052</scope>
</reference>
<protein>
    <recommendedName>
        <fullName>Olfactory receptor 4K13</fullName>
    </recommendedName>
    <alternativeName>
        <fullName>Olfactory receptor OR14-27</fullName>
    </alternativeName>
</protein>
<organism>
    <name type="scientific">Homo sapiens</name>
    <name type="common">Human</name>
    <dbReference type="NCBI Taxonomy" id="9606"/>
    <lineage>
        <taxon>Eukaryota</taxon>
        <taxon>Metazoa</taxon>
        <taxon>Chordata</taxon>
        <taxon>Craniata</taxon>
        <taxon>Vertebrata</taxon>
        <taxon>Euteleostomi</taxon>
        <taxon>Mammalia</taxon>
        <taxon>Eutheria</taxon>
        <taxon>Euarchontoglires</taxon>
        <taxon>Primates</taxon>
        <taxon>Haplorrhini</taxon>
        <taxon>Catarrhini</taxon>
        <taxon>Hominidae</taxon>
        <taxon>Homo</taxon>
    </lineage>
</organism>
<keyword id="KW-1003">Cell membrane</keyword>
<keyword id="KW-1015">Disulfide bond</keyword>
<keyword id="KW-0297">G-protein coupled receptor</keyword>
<keyword id="KW-0325">Glycoprotein</keyword>
<keyword id="KW-0472">Membrane</keyword>
<keyword id="KW-0552">Olfaction</keyword>
<keyword id="KW-0675">Receptor</keyword>
<keyword id="KW-1185">Reference proteome</keyword>
<keyword id="KW-0716">Sensory transduction</keyword>
<keyword id="KW-0807">Transducer</keyword>
<keyword id="KW-0812">Transmembrane</keyword>
<keyword id="KW-1133">Transmembrane helix</keyword>
<comment type="function">
    <text evidence="3">Odorant receptor.</text>
</comment>
<comment type="subcellular location">
    <subcellularLocation>
        <location>Cell membrane</location>
        <topology>Multi-pass membrane protein</topology>
    </subcellularLocation>
</comment>
<comment type="similarity">
    <text evidence="2">Belongs to the G-protein coupled receptor 1 family.</text>
</comment>
<comment type="online information" name="Human Olfactory Receptor Data Exploratorium (HORDE)">
    <link uri="http://genome.weizmann.ac.il/horde/card/index/symbol:OR4K13"/>
</comment>
<feature type="chain" id="PRO_0000150556" description="Olfactory receptor 4K13">
    <location>
        <begin position="1"/>
        <end position="304"/>
    </location>
</feature>
<feature type="topological domain" description="Extracellular" evidence="1">
    <location>
        <begin position="1"/>
        <end position="25"/>
    </location>
</feature>
<feature type="transmembrane region" description="Helical; Name=1" evidence="1">
    <location>
        <begin position="26"/>
        <end position="49"/>
    </location>
</feature>
<feature type="topological domain" description="Cytoplasmic" evidence="1">
    <location>
        <begin position="50"/>
        <end position="57"/>
    </location>
</feature>
<feature type="transmembrane region" description="Helical; Name=2" evidence="1">
    <location>
        <begin position="58"/>
        <end position="79"/>
    </location>
</feature>
<feature type="topological domain" description="Extracellular" evidence="1">
    <location>
        <begin position="80"/>
        <end position="100"/>
    </location>
</feature>
<feature type="transmembrane region" description="Helical; Name=3" evidence="1">
    <location>
        <begin position="101"/>
        <end position="120"/>
    </location>
</feature>
<feature type="topological domain" description="Cytoplasmic" evidence="1">
    <location>
        <begin position="121"/>
        <end position="139"/>
    </location>
</feature>
<feature type="transmembrane region" description="Helical; Name=4" evidence="1">
    <location>
        <begin position="140"/>
        <end position="158"/>
    </location>
</feature>
<feature type="topological domain" description="Extracellular" evidence="1">
    <location>
        <begin position="159"/>
        <end position="195"/>
    </location>
</feature>
<feature type="transmembrane region" description="Helical; Name=5" evidence="1">
    <location>
        <begin position="196"/>
        <end position="219"/>
    </location>
</feature>
<feature type="topological domain" description="Cytoplasmic" evidence="1">
    <location>
        <begin position="220"/>
        <end position="235"/>
    </location>
</feature>
<feature type="transmembrane region" description="Helical; Name=6" evidence="1">
    <location>
        <begin position="236"/>
        <end position="258"/>
    </location>
</feature>
<feature type="topological domain" description="Extracellular" evidence="1">
    <location>
        <begin position="259"/>
        <end position="269"/>
    </location>
</feature>
<feature type="transmembrane region" description="Helical; Name=7" evidence="1">
    <location>
        <begin position="270"/>
        <end position="289"/>
    </location>
</feature>
<feature type="topological domain" description="Cytoplasmic" evidence="1">
    <location>
        <begin position="290"/>
        <end position="304"/>
    </location>
</feature>
<feature type="glycosylation site" description="N-linked (GlcNAc...) asparagine" evidence="1">
    <location>
        <position position="5"/>
    </location>
</feature>
<feature type="disulfide bond" evidence="2">
    <location>
        <begin position="97"/>
        <end position="189"/>
    </location>
</feature>
<feature type="sequence variant" id="VAR_053172" description="In dbSNP:rs17277025.">
    <original>Q</original>
    <variation>K</variation>
    <location>
        <position position="292"/>
    </location>
</feature>
<accession>Q8NH42</accession>
<accession>Q6IF13</accession>
<evidence type="ECO:0000255" key="1"/>
<evidence type="ECO:0000255" key="2">
    <source>
        <dbReference type="PROSITE-ProRule" id="PRU00521"/>
    </source>
</evidence>
<evidence type="ECO:0000305" key="3"/>
<sequence length="304" mass="34261">MERANHSVVSEFILLGLSKSQNLQILFFLGFSVVFVGIVLGNLLILVTVTFDSLLHTPMYFLLSNLSCIDMILASFATPKMIVDFLRERKTISWWGCYSQMFFMHLLGGSEMMLLVAMAIDRYVAICKPLHYMTIMSPRVLTGLLLSSYAVGFVHSSSQMAFMLTLPFCGPNVIDSFFCDLPLVIKLACKDTYILQLLVIADSGLLSLVCFLLLLVSYGVIIFSVRYRAASRSSKAFSTLSAHITVVTLFFAPCVFIYVWPFSRYSVDKILSVFYTIFTPLLNPIIYTLRNQEVKAAIKKRLCI</sequence>
<name>OR4KD_HUMAN</name>
<proteinExistence type="inferred from homology"/>